<name>3MGH_CLOB8</name>
<evidence type="ECO:0000255" key="1">
    <source>
        <dbReference type="HAMAP-Rule" id="MF_00527"/>
    </source>
</evidence>
<sequence length="203" mass="23638">MILNKEFYKQGALILAKELLGKVIIRKVDGVTLRAKIVETEAYIGEIDKASHAYNGRRTERTEPLFREGGIAYVYFIYGKYYCFNVISGLEDKGEGVLIRAFEPLNEFDYLAKKRFNQNYDELSETKKKAITNGPSKLCIAFSIDKSENYKRLYDEGDFYIEEGEKDTFKIVETKRIGIDYAEEAIDFPWRFYIEGNKYISKK</sequence>
<organism>
    <name type="scientific">Clostridium beijerinckii (strain ATCC 51743 / NCIMB 8052)</name>
    <name type="common">Clostridium acetobutylicum</name>
    <dbReference type="NCBI Taxonomy" id="290402"/>
    <lineage>
        <taxon>Bacteria</taxon>
        <taxon>Bacillati</taxon>
        <taxon>Bacillota</taxon>
        <taxon>Clostridia</taxon>
        <taxon>Eubacteriales</taxon>
        <taxon>Clostridiaceae</taxon>
        <taxon>Clostridium</taxon>
    </lineage>
</organism>
<reference key="1">
    <citation type="submission" date="2007-06" db="EMBL/GenBank/DDBJ databases">
        <title>Complete sequence of Clostridium beijerinckii NCIMB 8052.</title>
        <authorList>
            <consortium name="US DOE Joint Genome Institute"/>
            <person name="Copeland A."/>
            <person name="Lucas S."/>
            <person name="Lapidus A."/>
            <person name="Barry K."/>
            <person name="Detter J.C."/>
            <person name="Glavina del Rio T."/>
            <person name="Hammon N."/>
            <person name="Israni S."/>
            <person name="Dalin E."/>
            <person name="Tice H."/>
            <person name="Pitluck S."/>
            <person name="Sims D."/>
            <person name="Brettin T."/>
            <person name="Bruce D."/>
            <person name="Tapia R."/>
            <person name="Brainard J."/>
            <person name="Schmutz J."/>
            <person name="Larimer F."/>
            <person name="Land M."/>
            <person name="Hauser L."/>
            <person name="Kyrpides N."/>
            <person name="Mikhailova N."/>
            <person name="Bennet G."/>
            <person name="Cann I."/>
            <person name="Chen J.-S."/>
            <person name="Contreras A.L."/>
            <person name="Jones D."/>
            <person name="Kashket E."/>
            <person name="Mitchell W."/>
            <person name="Stoddard S."/>
            <person name="Schwarz W."/>
            <person name="Qureshi N."/>
            <person name="Young M."/>
            <person name="Shi Z."/>
            <person name="Ezeji T."/>
            <person name="White B."/>
            <person name="Blaschek H."/>
            <person name="Richardson P."/>
        </authorList>
    </citation>
    <scope>NUCLEOTIDE SEQUENCE [LARGE SCALE GENOMIC DNA]</scope>
    <source>
        <strain>ATCC 51743 / NCIMB 8052</strain>
    </source>
</reference>
<keyword id="KW-0227">DNA damage</keyword>
<keyword id="KW-0234">DNA repair</keyword>
<keyword id="KW-0378">Hydrolase</keyword>
<protein>
    <recommendedName>
        <fullName evidence="1">Putative 3-methyladenine DNA glycosylase</fullName>
        <ecNumber evidence="1">3.2.2.-</ecNumber>
    </recommendedName>
</protein>
<feature type="chain" id="PRO_1000081701" description="Putative 3-methyladenine DNA glycosylase">
    <location>
        <begin position="1"/>
        <end position="203"/>
    </location>
</feature>
<gene>
    <name type="ordered locus">Cbei_0072</name>
</gene>
<accession>A6LPI2</accession>
<comment type="similarity">
    <text evidence="1">Belongs to the DNA glycosylase MPG family.</text>
</comment>
<proteinExistence type="inferred from homology"/>
<dbReference type="EC" id="3.2.2.-" evidence="1"/>
<dbReference type="EMBL" id="CP000721">
    <property type="protein sequence ID" value="ABR32262.1"/>
    <property type="molecule type" value="Genomic_DNA"/>
</dbReference>
<dbReference type="RefSeq" id="WP_011967437.1">
    <property type="nucleotide sequence ID" value="NC_009617.1"/>
</dbReference>
<dbReference type="SMR" id="A6LPI2"/>
<dbReference type="KEGG" id="cbe:Cbei_0072"/>
<dbReference type="eggNOG" id="COG2094">
    <property type="taxonomic scope" value="Bacteria"/>
</dbReference>
<dbReference type="HOGENOM" id="CLU_060471_0_2_9"/>
<dbReference type="Proteomes" id="UP000000565">
    <property type="component" value="Chromosome"/>
</dbReference>
<dbReference type="GO" id="GO:0003905">
    <property type="term" value="F:alkylbase DNA N-glycosylase activity"/>
    <property type="evidence" value="ECO:0007669"/>
    <property type="project" value="InterPro"/>
</dbReference>
<dbReference type="GO" id="GO:0003677">
    <property type="term" value="F:DNA binding"/>
    <property type="evidence" value="ECO:0007669"/>
    <property type="project" value="InterPro"/>
</dbReference>
<dbReference type="GO" id="GO:0006284">
    <property type="term" value="P:base-excision repair"/>
    <property type="evidence" value="ECO:0007669"/>
    <property type="project" value="InterPro"/>
</dbReference>
<dbReference type="CDD" id="cd00540">
    <property type="entry name" value="AAG"/>
    <property type="match status" value="1"/>
</dbReference>
<dbReference type="FunFam" id="3.10.300.10:FF:000001">
    <property type="entry name" value="Putative 3-methyladenine DNA glycosylase"/>
    <property type="match status" value="1"/>
</dbReference>
<dbReference type="Gene3D" id="3.10.300.10">
    <property type="entry name" value="Methylpurine-DNA glycosylase (MPG)"/>
    <property type="match status" value="1"/>
</dbReference>
<dbReference type="HAMAP" id="MF_00527">
    <property type="entry name" value="3MGH"/>
    <property type="match status" value="1"/>
</dbReference>
<dbReference type="InterPro" id="IPR011034">
    <property type="entry name" value="Formyl_transferase-like_C_sf"/>
</dbReference>
<dbReference type="InterPro" id="IPR003180">
    <property type="entry name" value="MPG"/>
</dbReference>
<dbReference type="InterPro" id="IPR036995">
    <property type="entry name" value="MPG_sf"/>
</dbReference>
<dbReference type="NCBIfam" id="TIGR00567">
    <property type="entry name" value="3mg"/>
    <property type="match status" value="1"/>
</dbReference>
<dbReference type="NCBIfam" id="NF002001">
    <property type="entry name" value="PRK00802.1-1"/>
    <property type="match status" value="1"/>
</dbReference>
<dbReference type="PANTHER" id="PTHR10429">
    <property type="entry name" value="DNA-3-METHYLADENINE GLYCOSYLASE"/>
    <property type="match status" value="1"/>
</dbReference>
<dbReference type="PANTHER" id="PTHR10429:SF0">
    <property type="entry name" value="DNA-3-METHYLADENINE GLYCOSYLASE"/>
    <property type="match status" value="1"/>
</dbReference>
<dbReference type="Pfam" id="PF02245">
    <property type="entry name" value="Pur_DNA_glyco"/>
    <property type="match status" value="1"/>
</dbReference>
<dbReference type="SUPFAM" id="SSF50486">
    <property type="entry name" value="FMT C-terminal domain-like"/>
    <property type="match status" value="1"/>
</dbReference>